<sequence length="874" mass="98080">MTISHIDPEYQANTIEPSVQQDWENRKVFKVADTVEGKHRYILSMFPYPSGKLHMGHVRNYTIGDVISRFYRLKGETVLQPMGWDAFGLPAENAAIAHKVAPAKWTFENIAYMRDQLKKLGLSVDWDREFATCTPEYYHWEQWLFVQLYKKGLIYRKLSTVNWDPVDQTVLANEQVENGRGWRSGALVEKRDIPMYYFRITDYAQELLDDLDTLQDGWPQQVLTMQRNWIGRSTGMEITFPSANTEIYADGLTVYTTRADTLMGVTYVAVAAEHPLALKAAENNPELAAFIEECRMGSVAEADLATAEKKGMATGLFVKHPVTGEELPVWIANYVLMSYGSGAVMAVPAHDERDFEFANKFNLPIKQVIDAKGADDADYSATEWQEWYGSKEGKLVNSGEFDGLEFQAAFDAFLAKLEPQGLANSKVQFRLRDWGVSRQRYWGCPIPMINCDTCGQVTVPEDQLPVVLPTDVVPDGSGNPLNKMPEFYETKCPCCGGDARRETDTLDTFVESSWYYARYASPDFTGGMVKPEAAKNWLPVNQYIGGVEHAILHLLYARFFHKLMRDEGVVQGNEPFTNLLTQGMVLADTFYREAENGKKTWFNPADIELERDEKGRIISAKYSGDGQEVIIGGQEKMSKSKNNGIDPQAIIDQYGADTARVFMMFAAPPDQSLEWSDAGVEGANRFLKRVWRLVASFLEKGNSATAIDKANLSKDAQDLRRKTHETIQKVSDDIERRHAFNTAIAALMELLNASNKFEAKDDNDVAVEREAITTLLTLLAPFAPHLSQTLLAQFGTDLTEATFPEVDASALTRNTQTIVVQVNGKLRGKLEVSVDISKDELLAQAKALPEVQQFLTGPTKKEIVVPNKLVNLVV</sequence>
<protein>
    <recommendedName>
        <fullName evidence="1">Leucine--tRNA ligase</fullName>
        <ecNumber evidence="1">6.1.1.4</ecNumber>
    </recommendedName>
    <alternativeName>
        <fullName evidence="1">Leucyl-tRNA synthetase</fullName>
        <shortName evidence="1">LeuRS</shortName>
    </alternativeName>
</protein>
<feature type="chain" id="PRO_1000091279" description="Leucine--tRNA ligase">
    <location>
        <begin position="1"/>
        <end position="874"/>
    </location>
</feature>
<feature type="short sequence motif" description="'HIGH' region">
    <location>
        <begin position="47"/>
        <end position="57"/>
    </location>
</feature>
<feature type="short sequence motif" description="'KMSKS' region">
    <location>
        <begin position="636"/>
        <end position="640"/>
    </location>
</feature>
<feature type="binding site" evidence="1">
    <location>
        <position position="639"/>
    </location>
    <ligand>
        <name>ATP</name>
        <dbReference type="ChEBI" id="CHEBI:30616"/>
    </ligand>
</feature>
<keyword id="KW-0030">Aminoacyl-tRNA synthetase</keyword>
<keyword id="KW-0067">ATP-binding</keyword>
<keyword id="KW-0963">Cytoplasm</keyword>
<keyword id="KW-0436">Ligase</keyword>
<keyword id="KW-0547">Nucleotide-binding</keyword>
<keyword id="KW-0648">Protein biosynthesis</keyword>
<gene>
    <name evidence="1" type="primary">leuS</name>
    <name type="ordered locus">ACICU_00549</name>
</gene>
<organism>
    <name type="scientific">Acinetobacter baumannii (strain ACICU)</name>
    <dbReference type="NCBI Taxonomy" id="405416"/>
    <lineage>
        <taxon>Bacteria</taxon>
        <taxon>Pseudomonadati</taxon>
        <taxon>Pseudomonadota</taxon>
        <taxon>Gammaproteobacteria</taxon>
        <taxon>Moraxellales</taxon>
        <taxon>Moraxellaceae</taxon>
        <taxon>Acinetobacter</taxon>
        <taxon>Acinetobacter calcoaceticus/baumannii complex</taxon>
    </lineage>
</organism>
<reference key="1">
    <citation type="journal article" date="2008" name="Antimicrob. Agents Chemother.">
        <title>Whole-genome pyrosequencing of an epidemic multidrug-resistant Acinetobacter baumannii strain belonging to the European clone II group.</title>
        <authorList>
            <person name="Iacono M."/>
            <person name="Villa L."/>
            <person name="Fortini D."/>
            <person name="Bordoni R."/>
            <person name="Imperi F."/>
            <person name="Bonnal R.J."/>
            <person name="Sicheritz-Ponten T."/>
            <person name="De Bellis G."/>
            <person name="Visca P."/>
            <person name="Cassone A."/>
            <person name="Carattoli A."/>
        </authorList>
    </citation>
    <scope>NUCLEOTIDE SEQUENCE [LARGE SCALE GENOMIC DNA]</scope>
    <source>
        <strain>ACICU</strain>
    </source>
</reference>
<comment type="catalytic activity">
    <reaction evidence="1">
        <text>tRNA(Leu) + L-leucine + ATP = L-leucyl-tRNA(Leu) + AMP + diphosphate</text>
        <dbReference type="Rhea" id="RHEA:11688"/>
        <dbReference type="Rhea" id="RHEA-COMP:9613"/>
        <dbReference type="Rhea" id="RHEA-COMP:9622"/>
        <dbReference type="ChEBI" id="CHEBI:30616"/>
        <dbReference type="ChEBI" id="CHEBI:33019"/>
        <dbReference type="ChEBI" id="CHEBI:57427"/>
        <dbReference type="ChEBI" id="CHEBI:78442"/>
        <dbReference type="ChEBI" id="CHEBI:78494"/>
        <dbReference type="ChEBI" id="CHEBI:456215"/>
        <dbReference type="EC" id="6.1.1.4"/>
    </reaction>
</comment>
<comment type="subcellular location">
    <subcellularLocation>
        <location evidence="1">Cytoplasm</location>
    </subcellularLocation>
</comment>
<comment type="similarity">
    <text evidence="1">Belongs to the class-I aminoacyl-tRNA synthetase family.</text>
</comment>
<dbReference type="EC" id="6.1.1.4" evidence="1"/>
<dbReference type="EMBL" id="CP000863">
    <property type="protein sequence ID" value="ACC55861.1"/>
    <property type="molecule type" value="Genomic_DNA"/>
</dbReference>
<dbReference type="RefSeq" id="WP_000155773.1">
    <property type="nucleotide sequence ID" value="NZ_CP031380.1"/>
</dbReference>
<dbReference type="SMR" id="B2HTC4"/>
<dbReference type="GeneID" id="92892523"/>
<dbReference type="KEGG" id="abc:ACICU_00549"/>
<dbReference type="HOGENOM" id="CLU_004427_0_0_6"/>
<dbReference type="Proteomes" id="UP000008839">
    <property type="component" value="Chromosome"/>
</dbReference>
<dbReference type="GO" id="GO:0005829">
    <property type="term" value="C:cytosol"/>
    <property type="evidence" value="ECO:0007669"/>
    <property type="project" value="TreeGrafter"/>
</dbReference>
<dbReference type="GO" id="GO:0002161">
    <property type="term" value="F:aminoacyl-tRNA deacylase activity"/>
    <property type="evidence" value="ECO:0007669"/>
    <property type="project" value="InterPro"/>
</dbReference>
<dbReference type="GO" id="GO:0005524">
    <property type="term" value="F:ATP binding"/>
    <property type="evidence" value="ECO:0007669"/>
    <property type="project" value="UniProtKB-UniRule"/>
</dbReference>
<dbReference type="GO" id="GO:0004823">
    <property type="term" value="F:leucine-tRNA ligase activity"/>
    <property type="evidence" value="ECO:0007669"/>
    <property type="project" value="UniProtKB-UniRule"/>
</dbReference>
<dbReference type="GO" id="GO:0006429">
    <property type="term" value="P:leucyl-tRNA aminoacylation"/>
    <property type="evidence" value="ECO:0007669"/>
    <property type="project" value="UniProtKB-UniRule"/>
</dbReference>
<dbReference type="CDD" id="cd07958">
    <property type="entry name" value="Anticodon_Ia_Leu_BEm"/>
    <property type="match status" value="1"/>
</dbReference>
<dbReference type="CDD" id="cd00812">
    <property type="entry name" value="LeuRS_core"/>
    <property type="match status" value="1"/>
</dbReference>
<dbReference type="FunFam" id="1.10.730.10:FF:000003">
    <property type="entry name" value="Leucine--tRNA ligase"/>
    <property type="match status" value="1"/>
</dbReference>
<dbReference type="FunFam" id="2.20.28.290:FF:000001">
    <property type="entry name" value="Leucine--tRNA ligase"/>
    <property type="match status" value="1"/>
</dbReference>
<dbReference type="FunFam" id="3.40.50.620:FF:000003">
    <property type="entry name" value="Leucine--tRNA ligase"/>
    <property type="match status" value="1"/>
</dbReference>
<dbReference type="FunFam" id="3.40.50.620:FF:000124">
    <property type="entry name" value="Leucine--tRNA ligase"/>
    <property type="match status" value="1"/>
</dbReference>
<dbReference type="FunFam" id="3.90.740.10:FF:000012">
    <property type="entry name" value="Leucine--tRNA ligase"/>
    <property type="match status" value="1"/>
</dbReference>
<dbReference type="Gene3D" id="2.20.28.290">
    <property type="match status" value="1"/>
</dbReference>
<dbReference type="Gene3D" id="3.10.20.590">
    <property type="match status" value="1"/>
</dbReference>
<dbReference type="Gene3D" id="3.40.50.620">
    <property type="entry name" value="HUPs"/>
    <property type="match status" value="2"/>
</dbReference>
<dbReference type="Gene3D" id="1.10.730.10">
    <property type="entry name" value="Isoleucyl-tRNA Synthetase, Domain 1"/>
    <property type="match status" value="1"/>
</dbReference>
<dbReference type="Gene3D" id="3.90.740.10">
    <property type="entry name" value="Valyl/Leucyl/Isoleucyl-tRNA synthetase, editing domain"/>
    <property type="match status" value="1"/>
</dbReference>
<dbReference type="HAMAP" id="MF_00049_B">
    <property type="entry name" value="Leu_tRNA_synth_B"/>
    <property type="match status" value="1"/>
</dbReference>
<dbReference type="InterPro" id="IPR001412">
    <property type="entry name" value="aa-tRNA-synth_I_CS"/>
</dbReference>
<dbReference type="InterPro" id="IPR002300">
    <property type="entry name" value="aa-tRNA-synth_Ia"/>
</dbReference>
<dbReference type="InterPro" id="IPR002302">
    <property type="entry name" value="Leu-tRNA-ligase"/>
</dbReference>
<dbReference type="InterPro" id="IPR025709">
    <property type="entry name" value="Leu_tRNA-synth_edit"/>
</dbReference>
<dbReference type="InterPro" id="IPR013155">
    <property type="entry name" value="M/V/L/I-tRNA-synth_anticd-bd"/>
</dbReference>
<dbReference type="InterPro" id="IPR015413">
    <property type="entry name" value="Methionyl/Leucyl_tRNA_Synth"/>
</dbReference>
<dbReference type="InterPro" id="IPR014729">
    <property type="entry name" value="Rossmann-like_a/b/a_fold"/>
</dbReference>
<dbReference type="InterPro" id="IPR009080">
    <property type="entry name" value="tRNAsynth_Ia_anticodon-bd"/>
</dbReference>
<dbReference type="InterPro" id="IPR009008">
    <property type="entry name" value="Val/Leu/Ile-tRNA-synth_edit"/>
</dbReference>
<dbReference type="NCBIfam" id="TIGR00396">
    <property type="entry name" value="leuS_bact"/>
    <property type="match status" value="1"/>
</dbReference>
<dbReference type="PANTHER" id="PTHR43740:SF2">
    <property type="entry name" value="LEUCINE--TRNA LIGASE, MITOCHONDRIAL"/>
    <property type="match status" value="1"/>
</dbReference>
<dbReference type="PANTHER" id="PTHR43740">
    <property type="entry name" value="LEUCYL-TRNA SYNTHETASE"/>
    <property type="match status" value="1"/>
</dbReference>
<dbReference type="Pfam" id="PF08264">
    <property type="entry name" value="Anticodon_1"/>
    <property type="match status" value="1"/>
</dbReference>
<dbReference type="Pfam" id="PF00133">
    <property type="entry name" value="tRNA-synt_1"/>
    <property type="match status" value="1"/>
</dbReference>
<dbReference type="Pfam" id="PF13603">
    <property type="entry name" value="tRNA-synt_1_2"/>
    <property type="match status" value="1"/>
</dbReference>
<dbReference type="Pfam" id="PF09334">
    <property type="entry name" value="tRNA-synt_1g"/>
    <property type="match status" value="1"/>
</dbReference>
<dbReference type="PRINTS" id="PR00985">
    <property type="entry name" value="TRNASYNTHLEU"/>
</dbReference>
<dbReference type="SUPFAM" id="SSF47323">
    <property type="entry name" value="Anticodon-binding domain of a subclass of class I aminoacyl-tRNA synthetases"/>
    <property type="match status" value="1"/>
</dbReference>
<dbReference type="SUPFAM" id="SSF52374">
    <property type="entry name" value="Nucleotidylyl transferase"/>
    <property type="match status" value="1"/>
</dbReference>
<dbReference type="SUPFAM" id="SSF50677">
    <property type="entry name" value="ValRS/IleRS/LeuRS editing domain"/>
    <property type="match status" value="1"/>
</dbReference>
<dbReference type="PROSITE" id="PS00178">
    <property type="entry name" value="AA_TRNA_LIGASE_I"/>
    <property type="match status" value="1"/>
</dbReference>
<evidence type="ECO:0000255" key="1">
    <source>
        <dbReference type="HAMAP-Rule" id="MF_00049"/>
    </source>
</evidence>
<accession>B2HTC4</accession>
<name>SYL_ACIBC</name>
<proteinExistence type="inferred from homology"/>